<evidence type="ECO:0000255" key="1">
    <source>
        <dbReference type="HAMAP-Rule" id="MF_00144"/>
    </source>
</evidence>
<evidence type="ECO:0000305" key="2"/>
<comment type="function">
    <text evidence="1">Catalyzes the 2-thiolation of uridine at the wobble position (U34) of tRNA, leading to the formation of s(2)U34.</text>
</comment>
<comment type="catalytic activity">
    <reaction evidence="1">
        <text>S-sulfanyl-L-cysteinyl-[protein] + uridine(34) in tRNA + AH2 + ATP = 2-thiouridine(34) in tRNA + L-cysteinyl-[protein] + A + AMP + diphosphate + H(+)</text>
        <dbReference type="Rhea" id="RHEA:47032"/>
        <dbReference type="Rhea" id="RHEA-COMP:10131"/>
        <dbReference type="Rhea" id="RHEA-COMP:11726"/>
        <dbReference type="Rhea" id="RHEA-COMP:11727"/>
        <dbReference type="Rhea" id="RHEA-COMP:11728"/>
        <dbReference type="ChEBI" id="CHEBI:13193"/>
        <dbReference type="ChEBI" id="CHEBI:15378"/>
        <dbReference type="ChEBI" id="CHEBI:17499"/>
        <dbReference type="ChEBI" id="CHEBI:29950"/>
        <dbReference type="ChEBI" id="CHEBI:30616"/>
        <dbReference type="ChEBI" id="CHEBI:33019"/>
        <dbReference type="ChEBI" id="CHEBI:61963"/>
        <dbReference type="ChEBI" id="CHEBI:65315"/>
        <dbReference type="ChEBI" id="CHEBI:87170"/>
        <dbReference type="ChEBI" id="CHEBI:456215"/>
        <dbReference type="EC" id="2.8.1.13"/>
    </reaction>
</comment>
<comment type="subcellular location">
    <subcellularLocation>
        <location evidence="1">Cytoplasm</location>
    </subcellularLocation>
</comment>
<comment type="similarity">
    <text evidence="1">Belongs to the MnmA/TRMU family.</text>
</comment>
<comment type="sequence caution" evidence="2">
    <conflict type="erroneous initiation">
        <sequence resource="EMBL-CDS" id="ABS08608"/>
    </conflict>
</comment>
<name>MNMA_SHEB8</name>
<protein>
    <recommendedName>
        <fullName evidence="1">tRNA-specific 2-thiouridylase MnmA</fullName>
        <ecNumber evidence="1">2.8.1.13</ecNumber>
    </recommendedName>
</protein>
<gene>
    <name evidence="1" type="primary">mnmA</name>
    <name type="ordered locus">Shew185_2471</name>
</gene>
<organism>
    <name type="scientific">Shewanella baltica (strain OS185)</name>
    <dbReference type="NCBI Taxonomy" id="402882"/>
    <lineage>
        <taxon>Bacteria</taxon>
        <taxon>Pseudomonadati</taxon>
        <taxon>Pseudomonadota</taxon>
        <taxon>Gammaproteobacteria</taxon>
        <taxon>Alteromonadales</taxon>
        <taxon>Shewanellaceae</taxon>
        <taxon>Shewanella</taxon>
    </lineage>
</organism>
<sequence>MTSIEPTHTGKKVIVGMSGGVDSSVSAYLLMQQGYQVEGLFMKNWEEDDNNEYCAAAEDLKDAQAVCDKLGIKLHTVNFAAEYWDNVFEYFLAEYKAGRTPNPDIMCNKEIKFKAFLEFADEILDADYIAMGHYVRRRDNSDGSTQMLRGVDGNKDQSYFLYTLSHEQVARSLFPVGELEKHEVREIAKEMGLITHDKKDSTGICFIGERKFTEFLGTYLPAQPGNIETPEGEVIGTHQGLMYHTLGQRKGLGIGGMKNSNDDPWYVVDKDLERNVLIVGQGGHHPRLMSTGMTVNQLHWVDRTGPVDGCHIAVKTRYRQQDVPCTLTYTDEHTLRVVFDEPVAAVTPGQSAVFYDGEVCLGGGIIDQLIRG</sequence>
<dbReference type="EC" id="2.8.1.13" evidence="1"/>
<dbReference type="EMBL" id="CP000753">
    <property type="protein sequence ID" value="ABS08608.1"/>
    <property type="status" value="ALT_INIT"/>
    <property type="molecule type" value="Genomic_DNA"/>
</dbReference>
<dbReference type="RefSeq" id="WP_041411177.1">
    <property type="nucleotide sequence ID" value="NC_009665.1"/>
</dbReference>
<dbReference type="SMR" id="A6WP69"/>
<dbReference type="KEGG" id="sbm:Shew185_2471"/>
<dbReference type="HOGENOM" id="CLU_035188_1_0_6"/>
<dbReference type="GO" id="GO:0005737">
    <property type="term" value="C:cytoplasm"/>
    <property type="evidence" value="ECO:0007669"/>
    <property type="project" value="UniProtKB-SubCell"/>
</dbReference>
<dbReference type="GO" id="GO:0005524">
    <property type="term" value="F:ATP binding"/>
    <property type="evidence" value="ECO:0007669"/>
    <property type="project" value="UniProtKB-KW"/>
</dbReference>
<dbReference type="GO" id="GO:0000049">
    <property type="term" value="F:tRNA binding"/>
    <property type="evidence" value="ECO:0007669"/>
    <property type="project" value="UniProtKB-KW"/>
</dbReference>
<dbReference type="GO" id="GO:0103016">
    <property type="term" value="F:tRNA-uridine 2-sulfurtransferase activity"/>
    <property type="evidence" value="ECO:0007669"/>
    <property type="project" value="UniProtKB-EC"/>
</dbReference>
<dbReference type="GO" id="GO:0002143">
    <property type="term" value="P:tRNA wobble position uridine thiolation"/>
    <property type="evidence" value="ECO:0007669"/>
    <property type="project" value="TreeGrafter"/>
</dbReference>
<dbReference type="CDD" id="cd01998">
    <property type="entry name" value="MnmA_TRMU-like"/>
    <property type="match status" value="1"/>
</dbReference>
<dbReference type="FunFam" id="2.30.30.280:FF:000001">
    <property type="entry name" value="tRNA-specific 2-thiouridylase MnmA"/>
    <property type="match status" value="1"/>
</dbReference>
<dbReference type="FunFam" id="2.40.30.10:FF:000023">
    <property type="entry name" value="tRNA-specific 2-thiouridylase MnmA"/>
    <property type="match status" value="1"/>
</dbReference>
<dbReference type="FunFam" id="3.40.50.620:FF:000004">
    <property type="entry name" value="tRNA-specific 2-thiouridylase MnmA"/>
    <property type="match status" value="1"/>
</dbReference>
<dbReference type="Gene3D" id="2.30.30.280">
    <property type="entry name" value="Adenine nucleotide alpha hydrolases-like domains"/>
    <property type="match status" value="1"/>
</dbReference>
<dbReference type="Gene3D" id="3.40.50.620">
    <property type="entry name" value="HUPs"/>
    <property type="match status" value="1"/>
</dbReference>
<dbReference type="Gene3D" id="2.40.30.10">
    <property type="entry name" value="Translation factors"/>
    <property type="match status" value="1"/>
</dbReference>
<dbReference type="HAMAP" id="MF_00144">
    <property type="entry name" value="tRNA_thiouridyl_MnmA"/>
    <property type="match status" value="1"/>
</dbReference>
<dbReference type="InterPro" id="IPR004506">
    <property type="entry name" value="MnmA-like"/>
</dbReference>
<dbReference type="InterPro" id="IPR046885">
    <property type="entry name" value="MnmA-like_C"/>
</dbReference>
<dbReference type="InterPro" id="IPR046884">
    <property type="entry name" value="MnmA-like_central"/>
</dbReference>
<dbReference type="InterPro" id="IPR023382">
    <property type="entry name" value="MnmA-like_central_sf"/>
</dbReference>
<dbReference type="InterPro" id="IPR014729">
    <property type="entry name" value="Rossmann-like_a/b/a_fold"/>
</dbReference>
<dbReference type="NCBIfam" id="NF001138">
    <property type="entry name" value="PRK00143.1"/>
    <property type="match status" value="1"/>
</dbReference>
<dbReference type="NCBIfam" id="TIGR00420">
    <property type="entry name" value="trmU"/>
    <property type="match status" value="1"/>
</dbReference>
<dbReference type="PANTHER" id="PTHR11933:SF5">
    <property type="entry name" value="MITOCHONDRIAL TRNA-SPECIFIC 2-THIOURIDYLASE 1"/>
    <property type="match status" value="1"/>
</dbReference>
<dbReference type="PANTHER" id="PTHR11933">
    <property type="entry name" value="TRNA 5-METHYLAMINOMETHYL-2-THIOURIDYLATE -METHYLTRANSFERASE"/>
    <property type="match status" value="1"/>
</dbReference>
<dbReference type="Pfam" id="PF03054">
    <property type="entry name" value="tRNA_Me_trans"/>
    <property type="match status" value="1"/>
</dbReference>
<dbReference type="Pfam" id="PF20258">
    <property type="entry name" value="tRNA_Me_trans_C"/>
    <property type="match status" value="1"/>
</dbReference>
<dbReference type="Pfam" id="PF20259">
    <property type="entry name" value="tRNA_Me_trans_M"/>
    <property type="match status" value="1"/>
</dbReference>
<dbReference type="SUPFAM" id="SSF52402">
    <property type="entry name" value="Adenine nucleotide alpha hydrolases-like"/>
    <property type="match status" value="1"/>
</dbReference>
<feature type="chain" id="PRO_0000349790" description="tRNA-specific 2-thiouridylase MnmA">
    <location>
        <begin position="1"/>
        <end position="372"/>
    </location>
</feature>
<feature type="region of interest" description="Interaction with target base in tRNA" evidence="1">
    <location>
        <begin position="102"/>
        <end position="104"/>
    </location>
</feature>
<feature type="region of interest" description="Interaction with tRNA" evidence="1">
    <location>
        <begin position="155"/>
        <end position="157"/>
    </location>
</feature>
<feature type="region of interest" description="Interaction with tRNA" evidence="1">
    <location>
        <begin position="317"/>
        <end position="318"/>
    </location>
</feature>
<feature type="active site" description="Nucleophile" evidence="1">
    <location>
        <position position="107"/>
    </location>
</feature>
<feature type="active site" description="Cysteine persulfide intermediate" evidence="1">
    <location>
        <position position="205"/>
    </location>
</feature>
<feature type="binding site" evidence="1">
    <location>
        <begin position="16"/>
        <end position="23"/>
    </location>
    <ligand>
        <name>ATP</name>
        <dbReference type="ChEBI" id="CHEBI:30616"/>
    </ligand>
</feature>
<feature type="binding site" evidence="1">
    <location>
        <position position="42"/>
    </location>
    <ligand>
        <name>ATP</name>
        <dbReference type="ChEBI" id="CHEBI:30616"/>
    </ligand>
</feature>
<feature type="binding site" evidence="1">
    <location>
        <position position="132"/>
    </location>
    <ligand>
        <name>ATP</name>
        <dbReference type="ChEBI" id="CHEBI:30616"/>
    </ligand>
</feature>
<feature type="site" description="Interaction with tRNA" evidence="1">
    <location>
        <position position="133"/>
    </location>
</feature>
<feature type="site" description="Interaction with tRNA" evidence="1">
    <location>
        <position position="350"/>
    </location>
</feature>
<feature type="disulfide bond" description="Alternate" evidence="1">
    <location>
        <begin position="107"/>
        <end position="205"/>
    </location>
</feature>
<keyword id="KW-0067">ATP-binding</keyword>
<keyword id="KW-0963">Cytoplasm</keyword>
<keyword id="KW-1015">Disulfide bond</keyword>
<keyword id="KW-0547">Nucleotide-binding</keyword>
<keyword id="KW-0694">RNA-binding</keyword>
<keyword id="KW-0808">Transferase</keyword>
<keyword id="KW-0819">tRNA processing</keyword>
<keyword id="KW-0820">tRNA-binding</keyword>
<proteinExistence type="inferred from homology"/>
<accession>A6WP69</accession>
<reference key="1">
    <citation type="submission" date="2007-07" db="EMBL/GenBank/DDBJ databases">
        <title>Complete sequence of chromosome of Shewanella baltica OS185.</title>
        <authorList>
            <consortium name="US DOE Joint Genome Institute"/>
            <person name="Copeland A."/>
            <person name="Lucas S."/>
            <person name="Lapidus A."/>
            <person name="Barry K."/>
            <person name="Glavina del Rio T."/>
            <person name="Dalin E."/>
            <person name="Tice H."/>
            <person name="Pitluck S."/>
            <person name="Sims D."/>
            <person name="Brettin T."/>
            <person name="Bruce D."/>
            <person name="Detter J.C."/>
            <person name="Han C."/>
            <person name="Schmutz J."/>
            <person name="Larimer F."/>
            <person name="Land M."/>
            <person name="Hauser L."/>
            <person name="Kyrpides N."/>
            <person name="Mikhailova N."/>
            <person name="Brettar I."/>
            <person name="Rodrigues J."/>
            <person name="Konstantinidis K."/>
            <person name="Tiedje J."/>
            <person name="Richardson P."/>
        </authorList>
    </citation>
    <scope>NUCLEOTIDE SEQUENCE [LARGE SCALE GENOMIC DNA]</scope>
    <source>
        <strain>OS185</strain>
    </source>
</reference>